<organism>
    <name type="scientific">Calycanthus floridus var. glaucus</name>
    <name type="common">Eastern sweetshrub</name>
    <name type="synonym">Calycanthus fertilis var. ferax</name>
    <dbReference type="NCBI Taxonomy" id="212734"/>
    <lineage>
        <taxon>Eukaryota</taxon>
        <taxon>Viridiplantae</taxon>
        <taxon>Streptophyta</taxon>
        <taxon>Embryophyta</taxon>
        <taxon>Tracheophyta</taxon>
        <taxon>Spermatophyta</taxon>
        <taxon>Magnoliopsida</taxon>
        <taxon>Magnoliidae</taxon>
        <taxon>Laurales</taxon>
        <taxon>Calycanthaceae</taxon>
        <taxon>Calycanthus</taxon>
    </lineage>
</organism>
<keyword id="KW-0150">Chloroplast</keyword>
<keyword id="KW-0934">Plastid</keyword>
<keyword id="KW-0687">Ribonucleoprotein</keyword>
<keyword id="KW-0689">Ribosomal protein</keyword>
<keyword id="KW-0694">RNA-binding</keyword>
<keyword id="KW-0699">rRNA-binding</keyword>
<geneLocation type="chloroplast"/>
<accession>Q7YJX0</accession>
<name>RR4_CALFG</name>
<reference key="1">
    <citation type="journal article" date="2003" name="Plant Syst. Evol.">
        <title>The chloroplast genome of the 'basal' angiosperm Calycanthus fertilis -- structural and phylogenetic analyses.</title>
        <authorList>
            <person name="Goremykin V."/>
            <person name="Hirsch-Ernst K.I."/>
            <person name="Woelfl S."/>
            <person name="Hellwig F.H."/>
        </authorList>
    </citation>
    <scope>NUCLEOTIDE SEQUENCE [GENOMIC DNA]</scope>
</reference>
<comment type="function">
    <text evidence="1">One of the primary rRNA binding proteins, it binds directly to 16S rRNA where it nucleates assembly of the body of the 30S subunit.</text>
</comment>
<comment type="function">
    <text evidence="1">With S5 and S12 plays an important role in translational accuracy.</text>
</comment>
<comment type="subunit">
    <text evidence="1">Part of the 30S ribosomal subunit. Contacts protein S5. The interaction surface between S4 and S5 is involved in control of translational fidelity (By similarity).</text>
</comment>
<comment type="subcellular location">
    <subcellularLocation>
        <location>Plastid</location>
        <location>Chloroplast</location>
    </subcellularLocation>
</comment>
<comment type="similarity">
    <text evidence="3">Belongs to the universal ribosomal protein uS4 family.</text>
</comment>
<gene>
    <name type="primary">rps4</name>
</gene>
<feature type="chain" id="PRO_0000132551" description="Small ribosomal subunit protein uS4c">
    <location>
        <begin position="1"/>
        <end position="201"/>
    </location>
</feature>
<feature type="domain" description="S4 RNA-binding">
    <location>
        <begin position="89"/>
        <end position="150"/>
    </location>
</feature>
<feature type="region of interest" description="Disordered" evidence="2">
    <location>
        <begin position="15"/>
        <end position="44"/>
    </location>
</feature>
<dbReference type="EMBL" id="AJ428413">
    <property type="protein sequence ID" value="CAD28723.1"/>
    <property type="molecule type" value="Genomic_DNA"/>
</dbReference>
<dbReference type="RefSeq" id="NP_862756.1">
    <property type="nucleotide sequence ID" value="NC_004993.1"/>
</dbReference>
<dbReference type="SMR" id="Q7YJX0"/>
<dbReference type="GeneID" id="2598045"/>
<dbReference type="GO" id="GO:0009507">
    <property type="term" value="C:chloroplast"/>
    <property type="evidence" value="ECO:0007669"/>
    <property type="project" value="UniProtKB-SubCell"/>
</dbReference>
<dbReference type="GO" id="GO:0015935">
    <property type="term" value="C:small ribosomal subunit"/>
    <property type="evidence" value="ECO:0007669"/>
    <property type="project" value="InterPro"/>
</dbReference>
<dbReference type="GO" id="GO:0019843">
    <property type="term" value="F:rRNA binding"/>
    <property type="evidence" value="ECO:0007669"/>
    <property type="project" value="UniProtKB-UniRule"/>
</dbReference>
<dbReference type="GO" id="GO:0003735">
    <property type="term" value="F:structural constituent of ribosome"/>
    <property type="evidence" value="ECO:0007669"/>
    <property type="project" value="InterPro"/>
</dbReference>
<dbReference type="GO" id="GO:0042274">
    <property type="term" value="P:ribosomal small subunit biogenesis"/>
    <property type="evidence" value="ECO:0007669"/>
    <property type="project" value="TreeGrafter"/>
</dbReference>
<dbReference type="GO" id="GO:0006412">
    <property type="term" value="P:translation"/>
    <property type="evidence" value="ECO:0007669"/>
    <property type="project" value="UniProtKB-UniRule"/>
</dbReference>
<dbReference type="CDD" id="cd00165">
    <property type="entry name" value="S4"/>
    <property type="match status" value="1"/>
</dbReference>
<dbReference type="FunFam" id="1.10.1050.10:FF:000002">
    <property type="entry name" value="30S ribosomal protein S4, chloroplastic"/>
    <property type="match status" value="1"/>
</dbReference>
<dbReference type="FunFam" id="3.10.290.10:FF:000081">
    <property type="entry name" value="30S ribosomal protein S4, chloroplastic"/>
    <property type="match status" value="1"/>
</dbReference>
<dbReference type="Gene3D" id="1.10.1050.10">
    <property type="entry name" value="Ribosomal Protein S4 Delta 41, Chain A, domain 1"/>
    <property type="match status" value="1"/>
</dbReference>
<dbReference type="Gene3D" id="3.10.290.10">
    <property type="entry name" value="RNA-binding S4 domain"/>
    <property type="match status" value="1"/>
</dbReference>
<dbReference type="HAMAP" id="MF_01306_B">
    <property type="entry name" value="Ribosomal_uS4_B"/>
    <property type="match status" value="1"/>
</dbReference>
<dbReference type="InterPro" id="IPR022801">
    <property type="entry name" value="Ribosomal_uS4"/>
</dbReference>
<dbReference type="InterPro" id="IPR005709">
    <property type="entry name" value="Ribosomal_uS4_bac-type"/>
</dbReference>
<dbReference type="InterPro" id="IPR018079">
    <property type="entry name" value="Ribosomal_uS4_CS"/>
</dbReference>
<dbReference type="InterPro" id="IPR001912">
    <property type="entry name" value="Ribosomal_uS4_N"/>
</dbReference>
<dbReference type="InterPro" id="IPR002942">
    <property type="entry name" value="S4_RNA-bd"/>
</dbReference>
<dbReference type="InterPro" id="IPR036986">
    <property type="entry name" value="S4_RNA-bd_sf"/>
</dbReference>
<dbReference type="NCBIfam" id="NF003717">
    <property type="entry name" value="PRK05327.1"/>
    <property type="match status" value="1"/>
</dbReference>
<dbReference type="NCBIfam" id="TIGR01017">
    <property type="entry name" value="rpsD_bact"/>
    <property type="match status" value="1"/>
</dbReference>
<dbReference type="PANTHER" id="PTHR11831">
    <property type="entry name" value="30S 40S RIBOSOMAL PROTEIN"/>
    <property type="match status" value="1"/>
</dbReference>
<dbReference type="PANTHER" id="PTHR11831:SF4">
    <property type="entry name" value="SMALL RIBOSOMAL SUBUNIT PROTEIN US4M"/>
    <property type="match status" value="1"/>
</dbReference>
<dbReference type="Pfam" id="PF00163">
    <property type="entry name" value="Ribosomal_S4"/>
    <property type="match status" value="1"/>
</dbReference>
<dbReference type="Pfam" id="PF01479">
    <property type="entry name" value="S4"/>
    <property type="match status" value="1"/>
</dbReference>
<dbReference type="SMART" id="SM01390">
    <property type="entry name" value="Ribosomal_S4"/>
    <property type="match status" value="1"/>
</dbReference>
<dbReference type="SMART" id="SM00363">
    <property type="entry name" value="S4"/>
    <property type="match status" value="1"/>
</dbReference>
<dbReference type="SUPFAM" id="SSF55174">
    <property type="entry name" value="Alpha-L RNA-binding motif"/>
    <property type="match status" value="1"/>
</dbReference>
<dbReference type="PROSITE" id="PS00632">
    <property type="entry name" value="RIBOSOMAL_S4"/>
    <property type="match status" value="1"/>
</dbReference>
<dbReference type="PROSITE" id="PS50889">
    <property type="entry name" value="S4"/>
    <property type="match status" value="1"/>
</dbReference>
<evidence type="ECO:0000250" key="1"/>
<evidence type="ECO:0000256" key="2">
    <source>
        <dbReference type="SAM" id="MobiDB-lite"/>
    </source>
</evidence>
<evidence type="ECO:0000305" key="3"/>
<protein>
    <recommendedName>
        <fullName evidence="3">Small ribosomal subunit protein uS4c</fullName>
    </recommendedName>
    <alternativeName>
        <fullName>30S ribosomal protein S4, chloroplastic</fullName>
    </alternativeName>
</protein>
<proteinExistence type="inferred from homology"/>
<sequence>MSRYRGPRFKKIRRLGALPGLTSKRPRSGSDLRNQSRSGKKSQYRIRLEEKQKLRFHYGLTERQLLRYVRIAGKAKGSTGQVLLQLLEMRLDNILFRLGMASTIPGARQLVNHRHILVNGRIVDIPSYRCKPRDIITTRDEQRSRALIQNYLDSPSHEELPKHLTFHPSQYKGLVNQIIDSKWVGLKINELLVVEYYSRQT</sequence>